<keyword id="KW-0687">Ribonucleoprotein</keyword>
<keyword id="KW-0689">Ribosomal protein</keyword>
<organism>
    <name type="scientific">Streptococcus pneumoniae (strain CGSP14)</name>
    <dbReference type="NCBI Taxonomy" id="516950"/>
    <lineage>
        <taxon>Bacteria</taxon>
        <taxon>Bacillati</taxon>
        <taxon>Bacillota</taxon>
        <taxon>Bacilli</taxon>
        <taxon>Lactobacillales</taxon>
        <taxon>Streptococcaceae</taxon>
        <taxon>Streptococcus</taxon>
    </lineage>
</organism>
<comment type="similarity">
    <text evidence="1">Belongs to the universal ribosomal protein uL29 family.</text>
</comment>
<name>RL29_STRPS</name>
<gene>
    <name evidence="1" type="primary">rpmC</name>
    <name type="ordered locus">SPCG_0226</name>
</gene>
<accession>B2IS48</accession>
<sequence>MKLNEVKEFVKELRGLSQEELAKRENELKKELFELRFQAATGQLEQTARLKEVKKQIARIKTVQSEAK</sequence>
<reference key="1">
    <citation type="journal article" date="2009" name="BMC Genomics">
        <title>Genome evolution driven by host adaptations results in a more virulent and antimicrobial-resistant Streptococcus pneumoniae serotype 14.</title>
        <authorList>
            <person name="Ding F."/>
            <person name="Tang P."/>
            <person name="Hsu M.-H."/>
            <person name="Cui P."/>
            <person name="Hu S."/>
            <person name="Yu J."/>
            <person name="Chiu C.-H."/>
        </authorList>
    </citation>
    <scope>NUCLEOTIDE SEQUENCE [LARGE SCALE GENOMIC DNA]</scope>
    <source>
        <strain>CGSP14</strain>
    </source>
</reference>
<evidence type="ECO:0000255" key="1">
    <source>
        <dbReference type="HAMAP-Rule" id="MF_00374"/>
    </source>
</evidence>
<evidence type="ECO:0000305" key="2"/>
<protein>
    <recommendedName>
        <fullName evidence="1">Large ribosomal subunit protein uL29</fullName>
    </recommendedName>
    <alternativeName>
        <fullName evidence="2">50S ribosomal protein L29</fullName>
    </alternativeName>
</protein>
<proteinExistence type="inferred from homology"/>
<dbReference type="EMBL" id="CP001033">
    <property type="protein sequence ID" value="ACB89478.1"/>
    <property type="molecule type" value="Genomic_DNA"/>
</dbReference>
<dbReference type="RefSeq" id="WP_000772918.1">
    <property type="nucleotide sequence ID" value="NC_010582.1"/>
</dbReference>
<dbReference type="SMR" id="B2IS48"/>
<dbReference type="GeneID" id="93738965"/>
<dbReference type="KEGG" id="spw:SPCG_0226"/>
<dbReference type="HOGENOM" id="CLU_158491_5_2_9"/>
<dbReference type="GO" id="GO:0022625">
    <property type="term" value="C:cytosolic large ribosomal subunit"/>
    <property type="evidence" value="ECO:0007669"/>
    <property type="project" value="TreeGrafter"/>
</dbReference>
<dbReference type="GO" id="GO:0003735">
    <property type="term" value="F:structural constituent of ribosome"/>
    <property type="evidence" value="ECO:0007669"/>
    <property type="project" value="InterPro"/>
</dbReference>
<dbReference type="GO" id="GO:0006412">
    <property type="term" value="P:translation"/>
    <property type="evidence" value="ECO:0007669"/>
    <property type="project" value="UniProtKB-UniRule"/>
</dbReference>
<dbReference type="CDD" id="cd00427">
    <property type="entry name" value="Ribosomal_L29_HIP"/>
    <property type="match status" value="1"/>
</dbReference>
<dbReference type="FunFam" id="1.10.287.310:FF:000001">
    <property type="entry name" value="50S ribosomal protein L29"/>
    <property type="match status" value="1"/>
</dbReference>
<dbReference type="Gene3D" id="1.10.287.310">
    <property type="match status" value="1"/>
</dbReference>
<dbReference type="HAMAP" id="MF_00374">
    <property type="entry name" value="Ribosomal_uL29"/>
    <property type="match status" value="1"/>
</dbReference>
<dbReference type="InterPro" id="IPR050063">
    <property type="entry name" value="Ribosomal_protein_uL29"/>
</dbReference>
<dbReference type="InterPro" id="IPR001854">
    <property type="entry name" value="Ribosomal_uL29"/>
</dbReference>
<dbReference type="InterPro" id="IPR018254">
    <property type="entry name" value="Ribosomal_uL29_CS"/>
</dbReference>
<dbReference type="InterPro" id="IPR036049">
    <property type="entry name" value="Ribosomal_uL29_sf"/>
</dbReference>
<dbReference type="NCBIfam" id="TIGR00012">
    <property type="entry name" value="L29"/>
    <property type="match status" value="1"/>
</dbReference>
<dbReference type="PANTHER" id="PTHR10916">
    <property type="entry name" value="60S RIBOSOMAL PROTEIN L35/50S RIBOSOMAL PROTEIN L29"/>
    <property type="match status" value="1"/>
</dbReference>
<dbReference type="PANTHER" id="PTHR10916:SF0">
    <property type="entry name" value="LARGE RIBOSOMAL SUBUNIT PROTEIN UL29C"/>
    <property type="match status" value="1"/>
</dbReference>
<dbReference type="Pfam" id="PF00831">
    <property type="entry name" value="Ribosomal_L29"/>
    <property type="match status" value="1"/>
</dbReference>
<dbReference type="SUPFAM" id="SSF46561">
    <property type="entry name" value="Ribosomal protein L29 (L29p)"/>
    <property type="match status" value="1"/>
</dbReference>
<dbReference type="PROSITE" id="PS00579">
    <property type="entry name" value="RIBOSOMAL_L29"/>
    <property type="match status" value="1"/>
</dbReference>
<feature type="chain" id="PRO_1000121825" description="Large ribosomal subunit protein uL29">
    <location>
        <begin position="1"/>
        <end position="68"/>
    </location>
</feature>